<evidence type="ECO:0000255" key="1"/>
<evidence type="ECO:0000255" key="2">
    <source>
        <dbReference type="PROSITE-ProRule" id="PRU00280"/>
    </source>
</evidence>
<evidence type="ECO:0000269" key="3">
    <source>
    </source>
</evidence>
<evidence type="ECO:0000269" key="4">
    <source>
    </source>
</evidence>
<evidence type="ECO:0000269" key="5">
    <source>
    </source>
</evidence>
<evidence type="ECO:0000269" key="6">
    <source>
    </source>
</evidence>
<evidence type="ECO:0000269" key="7">
    <source>
    </source>
</evidence>
<evidence type="ECO:0000269" key="8">
    <source>
    </source>
</evidence>
<evidence type="ECO:0000269" key="9">
    <source>
    </source>
</evidence>
<evidence type="ECO:0000269" key="10">
    <source>
    </source>
</evidence>
<evidence type="ECO:0000269" key="11">
    <source>
    </source>
</evidence>
<evidence type="ECO:0000269" key="12">
    <source>
    </source>
</evidence>
<evidence type="ECO:0000303" key="13">
    <source>
    </source>
</evidence>
<evidence type="ECO:0000303" key="14">
    <source>
    </source>
</evidence>
<evidence type="ECO:0000303" key="15">
    <source>
    </source>
</evidence>
<evidence type="ECO:0000305" key="16"/>
<evidence type="ECO:0000305" key="17">
    <source>
    </source>
</evidence>
<evidence type="ECO:0000305" key="18">
    <source>
    </source>
</evidence>
<evidence type="ECO:0000305" key="19">
    <source>
    </source>
</evidence>
<evidence type="ECO:0000305" key="20">
    <source>
    </source>
</evidence>
<evidence type="ECO:0000305" key="21">
    <source>
    </source>
</evidence>
<evidence type="ECO:0000305" key="22">
    <source>
    </source>
</evidence>
<feature type="initiator methionine" description="Removed" evidence="12">
    <location>
        <position position="1"/>
    </location>
</feature>
<feature type="chain" id="PRO_0000046320" description="Copper-exporting P-type ATPase">
    <location>
        <begin position="2"/>
        <end position="834"/>
    </location>
</feature>
<feature type="topological domain" description="Cytoplasmic" evidence="16">
    <location>
        <begin position="2"/>
        <end position="186"/>
    </location>
</feature>
<feature type="transmembrane region" description="Helical" evidence="1">
    <location>
        <begin position="187"/>
        <end position="207"/>
    </location>
</feature>
<feature type="topological domain" description="Periplasmic; loop 1" evidence="21">
    <location>
        <begin position="208"/>
        <end position="217"/>
    </location>
</feature>
<feature type="transmembrane region" description="Helical" evidence="1">
    <location>
        <begin position="218"/>
        <end position="238"/>
    </location>
</feature>
<feature type="topological domain" description="Cytoplasmic" evidence="16">
    <location>
        <begin position="239"/>
        <end position="253"/>
    </location>
</feature>
<feature type="transmembrane region" description="Helical" evidence="1">
    <location>
        <begin position="254"/>
        <end position="274"/>
    </location>
</feature>
<feature type="topological domain" description="Periplasmic; loop 2" evidence="21">
    <location>
        <begin position="275"/>
        <end position="283"/>
    </location>
</feature>
<feature type="transmembrane region" description="Helical" evidence="1">
    <location>
        <begin position="284"/>
        <end position="304"/>
    </location>
</feature>
<feature type="topological domain" description="Cytoplasmic" evidence="16">
    <location>
        <begin position="305"/>
        <end position="437"/>
    </location>
</feature>
<feature type="transmembrane region" description="Helical" evidence="1">
    <location>
        <begin position="438"/>
        <end position="458"/>
    </location>
</feature>
<feature type="topological domain" description="Periplasmic; loop 3" evidence="16">
    <location>
        <begin position="459"/>
        <end position="463"/>
    </location>
</feature>
<feature type="transmembrane region" description="Helical" evidence="1">
    <location>
        <begin position="464"/>
        <end position="484"/>
    </location>
</feature>
<feature type="topological domain" description="Cytoplasmic" evidence="16">
    <location>
        <begin position="485"/>
        <end position="778"/>
    </location>
</feature>
<feature type="transmembrane region" description="Helical" evidence="1">
    <location>
        <begin position="779"/>
        <end position="799"/>
    </location>
</feature>
<feature type="topological domain" description="Periplasmic; loop 4" evidence="21">
    <location>
        <position position="800"/>
    </location>
</feature>
<feature type="transmembrane region" description="Helical" evidence="1">
    <location>
        <begin position="801"/>
        <end position="821"/>
    </location>
</feature>
<feature type="topological domain" description="Cytoplasmic" evidence="8">
    <location>
        <begin position="822"/>
        <end position="834"/>
    </location>
</feature>
<feature type="domain" description="HMA 1" evidence="2">
    <location>
        <begin position="3"/>
        <end position="64"/>
    </location>
</feature>
<feature type="domain" description="HMA 2" evidence="2">
    <location>
        <begin position="99"/>
        <end position="162"/>
    </location>
</feature>
<feature type="short sequence motif" description="CXXC motif 1" evidence="18">
    <location>
        <begin position="14"/>
        <end position="17"/>
    </location>
</feature>
<feature type="short sequence motif" description="CXXC motif 2" evidence="18">
    <location>
        <begin position="110"/>
        <end position="113"/>
    </location>
</feature>
<feature type="active site" description="4-aspartylphosphate intermediate" evidence="19">
    <location>
        <position position="523"/>
    </location>
</feature>
<feature type="binding site" evidence="2">
    <location>
        <position position="14"/>
    </location>
    <ligand>
        <name>Cu(+)</name>
        <dbReference type="ChEBI" id="CHEBI:49552"/>
        <label>1</label>
    </ligand>
</feature>
<feature type="binding site" evidence="2">
    <location>
        <position position="17"/>
    </location>
    <ligand>
        <name>Cu(+)</name>
        <dbReference type="ChEBI" id="CHEBI:49552"/>
        <label>1</label>
    </ligand>
</feature>
<feature type="binding site" evidence="2">
    <location>
        <position position="110"/>
    </location>
    <ligand>
        <name>Cu(+)</name>
        <dbReference type="ChEBI" id="CHEBI:49552"/>
        <label>2</label>
    </ligand>
</feature>
<feature type="binding site" evidence="2">
    <location>
        <position position="113"/>
    </location>
    <ligand>
        <name>Cu(+)</name>
        <dbReference type="ChEBI" id="CHEBI:49552"/>
        <label>2</label>
    </ligand>
</feature>
<feature type="binding site">
    <location>
        <position position="720"/>
    </location>
    <ligand>
        <name>Mg(2+)</name>
        <dbReference type="ChEBI" id="CHEBI:18420"/>
    </ligand>
</feature>
<feature type="binding site">
    <location>
        <position position="724"/>
    </location>
    <ligand>
        <name>Mg(2+)</name>
        <dbReference type="ChEBI" id="CHEBI:18420"/>
    </ligand>
</feature>
<feature type="splice variant" id="VSP_059176" description="In isoform Soluble copper chaperone CopA(Z)." evidence="22">
    <original>AKPLAESSIPSEALTAVSEALPAATADDDDSQQLLLSGMSCASCVTRVQNALQSVPGVTQARVNLAERTALVMGSASPQDLVQAVEKAGYGAEAIEDDAKRRERQQETAVATMKRFRWQAIVALAVGIPVMVWGMIGDNMMVTADNRSLWLVIGLITLAVMVFAGGHFYRSAWKSLLNGAATMDTLVALGTGVAWLYSMSVNLWPQWFPMEARHLYYEASAMIIGLINLGHMLEARARQRSSKALEKLLDLTPPTARLVTDEGEKSVPLAEVQPGMLLRLTTGDRVPVDGEITQGEAWLDEAMLTGEPIPQQKGEGDSVHAGTVVQDGSVLFRASAVGSHTTLSRIIRMVRQAQSSKPEIGQLADKISAVFVPVVVVIALVSAAIWYFFGPAPQIVYTLVIATTVLIIACPCALGLATPMSIISGVGRAAEFGVLVRDADALQRASTLDTVVFDKTGTLTEGKPQVVAVKTFADVDEAQALRLAAALEQGSSHPLARAILDKAGDMQLPQVNGFRTLRGLGVSGEAEGHALLLGNQALLNEQQVGTKAIEAEITAQASQGATPVLLAVDGKAVALLAVRDPLRSDSVAALQRLHKAGYRLVMLTGDNPTTANAIAKEAGIDEVIAGVLPDGKAEAIKHLQSEGRQVAMVGDGINDAPALAQADVGIAMGGGSDVAIETAAITLMRHSLMGVADALAISRATLHNMKQNLLGAFIYNSIGIPVAAGILWPFTGTLLNPVVAGAAMALSSITVVSNANRLLRFKPKE</original>
    <variation>G</variation>
    <location>
        <begin position="70"/>
        <end position="834"/>
    </location>
</feature>
<feature type="mutagenesis site" description="Slight increase in CuSO(4)-stimulation of ATPase, no growth in CuSO(4). Grows when this protein fragment is provided in trans or if B.subtilis CopZ is present." evidence="10">
    <location>
        <begin position="1"/>
        <end position="70"/>
    </location>
</feature>
<feature type="mutagenesis site" description="No resistance to CuSO(4), does not form phosphate intermediate." evidence="6">
    <location>
        <begin position="3"/>
        <end position="113"/>
    </location>
</feature>
<feature type="mutagenesis site" description="Partial resistance to CuSO(4), forms phosphate intermediate." evidence="6">
    <location>
        <begin position="7"/>
        <end position="54"/>
    </location>
</feature>
<feature type="mutagenesis site" description="Loss of growth in the presence of CuSO(4), loss of Cu efflux." evidence="5">
    <location>
        <begin position="8"/>
        <end position="150"/>
    </location>
</feature>
<feature type="mutagenesis site" description="Wild-type growth in the presence of CuSO(4), no change in Cu efflux. Still forms phosphate intermediate; when associated with 110-A--A-113." evidence="5 6">
    <original>CGHC</original>
    <variation>AGHA</variation>
    <location>
        <begin position="14"/>
        <end position="17"/>
    </location>
</feature>
<feature type="mutagenesis site" description="No change in CuSO(4)-stimulation of ATPase. When expressed as an isolated protein fragment (residues 1-70) does not restore growth to the 71-K--G-834 fragment." evidence="10">
    <original>CGHC</original>
    <variation>SGHS</variation>
    <location>
        <begin position="14"/>
        <end position="17"/>
    </location>
</feature>
<feature type="mutagenesis site" description="Reduces -1 frameshifting efficiency about 2-fold in a 104 residue truncated construct." evidence="11">
    <original>EQADVSITEAHVTGTASAEQLIETIKQAGYDASVSH</original>
    <variation>SRRMCLSLKRTLPGLPVQNSRSKPSNKRVMTHLYAN</variation>
    <location>
        <begin position="32"/>
        <end position="67"/>
    </location>
</feature>
<feature type="mutagenesis site" description="Wild-type growth in the presence of CuSO(4), no change in Cu efflux. Still forms phosphate intermediate; when associated with 14-A--A-17." evidence="5 6">
    <original>CASC</original>
    <variation>AASA</variation>
    <location>
        <begin position="110"/>
        <end position="113"/>
    </location>
</feature>
<feature type="mutagenesis site" description="Loss of CuSO(4)-stimulation of ATPase. When present in the 51-K--G-834 fragment growth in CuSO(4) is not restored by protein fragment 1-M--A-70." evidence="10">
    <original>CASC</original>
    <variation>SASS</variation>
    <location>
        <begin position="110"/>
        <end position="113"/>
    </location>
</feature>
<feature type="mutagenesis site" description="Decreased transfer of Cu(+) to CusF, binds 2 Cu(+)." evidence="9">
    <original>M</original>
    <variation>A</variation>
    <location>
        <position position="204"/>
    </location>
</feature>
<feature type="mutagenesis site" description="First half of periplasmic loop 1, transfers about 10% Cu(+) to CusF." evidence="9">
    <original>DNMM</original>
    <variation>AAAA</variation>
    <location>
        <begin position="207"/>
        <end position="210"/>
    </location>
</feature>
<feature type="mutagenesis site" description="Second half of periplasmic loop 1, wild-type transfer of Cu(+) to CusF." evidence="9">
    <original>TADNR</original>
    <variation>AAANA</variation>
    <location>
        <begin position="212"/>
        <end position="216"/>
    </location>
</feature>
<feature type="mutagenesis site" description="First half of periplasmic loop 2, nearly wild-type transfer of Cu(+) to CusF." evidence="9">
    <original>WPQWF</original>
    <variation>APQAA</variation>
    <location>
        <begin position="273"/>
        <end position="277"/>
    </location>
</feature>
<feature type="mutagenesis site" description="Second half of periplasmic loop 2, wild-type transfer of Cu(+) to CusF." evidence="9">
    <original>MEARH</original>
    <variation>AAARA</variation>
    <location>
        <begin position="279"/>
        <end position="283"/>
    </location>
</feature>
<feature type="mutagenesis site" description="Decreased transfer of Cu(+) to CusF." evidence="9">
    <original>E</original>
    <variation>A</variation>
    <location>
        <position position="287"/>
    </location>
</feature>
<feature type="mutagenesis site" description="Loss of copper resistance, transport and phosphoenzyme formation." evidence="6">
    <original>C</original>
    <variation>A</variation>
    <location>
        <position position="479"/>
    </location>
</feature>
<feature type="mutagenesis site" description="Loss of copper resistance, transport and phosphoenzyme formation." evidence="6">
    <original>C</original>
    <variation>A</variation>
    <variation>H</variation>
    <location>
        <position position="481"/>
    </location>
</feature>
<feature type="mutagenesis site" description="Periplasmic loop 4, nearly wild-type transfer of Cu(+) to CusF." evidence="9">
    <original>WPFTGT</original>
    <variation>APFAGA</variation>
    <location>
        <begin position="797"/>
        <end position="802"/>
    </location>
</feature>
<feature type="sequence conflict" description="In Ref. 1; AAB02268." evidence="16" ref="1">
    <original>EAIEDDAKRRERQQETAVAT</original>
    <variation>KRLKMTLNAASASKKPPSLA</variation>
    <location>
        <begin position="162"/>
        <end position="181"/>
    </location>
</feature>
<feature type="sequence conflict" description="In Ref. 1; AAB02268." evidence="16" ref="1">
    <original>A</original>
    <variation>R</variation>
    <location>
        <position position="508"/>
    </location>
</feature>
<feature type="sequence conflict" description="In Ref. 1; AAB02268." evidence="16" ref="1">
    <original>Q</original>
    <variation>R</variation>
    <location>
        <position position="576"/>
    </location>
</feature>
<protein>
    <recommendedName>
        <fullName evidence="13">Copper-exporting P-type ATPase</fullName>
        <ecNumber evidence="17 21">7.2.2.8</ecNumber>
    </recommendedName>
    <alternativeName>
        <fullName>Copper-exporting P-type ATPase A</fullName>
    </alternativeName>
    <alternativeName>
        <fullName>Cu(+)-exporting ATPase</fullName>
    </alternativeName>
    <alternativeName>
        <fullName evidence="14">Soluble copper chaperone CopA(Z)</fullName>
    </alternativeName>
</protein>
<gene>
    <name evidence="13" type="primary">copA</name>
    <name evidence="15" type="synonym">atcU</name>
    <name type="synonym">f834</name>
    <name type="synonym">ybaR</name>
    <name type="ordered locus">b0484</name>
    <name type="ordered locus">JW0473</name>
</gene>
<keyword id="KW-0067">ATP-binding</keyword>
<keyword id="KW-0997">Cell inner membrane</keyword>
<keyword id="KW-1003">Cell membrane</keyword>
<keyword id="KW-0143">Chaperone</keyword>
<keyword id="KW-0186">Copper</keyword>
<keyword id="KW-0187">Copper transport</keyword>
<keyword id="KW-0963">Cytoplasm</keyword>
<keyword id="KW-0903">Direct protein sequencing</keyword>
<keyword id="KW-0406">Ion transport</keyword>
<keyword id="KW-0460">Magnesium</keyword>
<keyword id="KW-0472">Membrane</keyword>
<keyword id="KW-0479">Metal-binding</keyword>
<keyword id="KW-0547">Nucleotide-binding</keyword>
<keyword id="KW-0597">Phosphoprotein</keyword>
<keyword id="KW-1185">Reference proteome</keyword>
<keyword id="KW-0677">Repeat</keyword>
<keyword id="KW-0688">Ribosomal frameshifting</keyword>
<keyword id="KW-1278">Translocase</keyword>
<keyword id="KW-0812">Transmembrane</keyword>
<keyword id="KW-1133">Transmembrane helix</keyword>
<keyword id="KW-0813">Transport</keyword>
<comment type="function">
    <molecule>Copper-exporting P-type ATPase</molecule>
    <text evidence="3 4 5 6 7 9">Exports Cu(+) from the cytoplasm to the periplasm (PubMed:10639134, PubMed:11167016, PubMed:11500054, PubMed:12351646). Binds 2 Cu(+) ions per monomer, which are transferred to periplasmic copper chaperone CusF upon ATP hydrolysis (PubMed:24917681). In vitro an excess of CusF over CopA is required for efficient transfer (PubMed:24917681). May also be involved in silver export (PubMed:12351646, PubMed:12832075).</text>
</comment>
<comment type="function">
    <molecule>Isoform Soluble copper chaperone CopA(Z)</molecule>
    <text evidence="10 11">mRNA is subject to programmed ribosomal frameshifting which produces a cytoplasmic copper chaperone CopA(Z) that corresponds to the first HMA domain (PubMed:28107647). The soluble form is essential for cell survivial in the presence of CuSO(4); in growth competition experiments between wild-type and a version that prevents expression of CopA(Z) after 50 generations the non-CopA(Z) version is nearly extinct (PubMed:28107647). The first HMA domain (residues 1-70) can be replaced by B.subtilis Cu chaperone CopZ (PubMed:25899340).</text>
</comment>
<comment type="catalytic activity">
    <reaction evidence="17 21">
        <text>Cu(+)(in) + ATP + H2O = Cu(+)(out) + ADP + phosphate + H(+)</text>
        <dbReference type="Rhea" id="RHEA:25792"/>
        <dbReference type="ChEBI" id="CHEBI:15377"/>
        <dbReference type="ChEBI" id="CHEBI:15378"/>
        <dbReference type="ChEBI" id="CHEBI:30616"/>
        <dbReference type="ChEBI" id="CHEBI:43474"/>
        <dbReference type="ChEBI" id="CHEBI:49552"/>
        <dbReference type="ChEBI" id="CHEBI:456216"/>
        <dbReference type="EC" id="7.2.2.8"/>
    </reaction>
</comment>
<comment type="activity regulation">
    <molecule>Copper-exporting P-type ATPase</molecule>
    <text evidence="3 6 10">Export is inhibited by vanadate (PubMed:10639134). Phosphorylation is inhibited by vanadate and sensitive to KOH and hydroxylamine; it is not inhibited by azide (PubMed:12351646). Phosphorylation is Cu(+) not Cu(2+)-dependent (PubMed:12351646). ATPase activity is inhibited by bathocuproindisulfonate (BCDS), which chelates Cu(+) but not Cu(2+), and stimulated 3-4-fold by Cu(+) (PubMed:12351646, PubMed:25899340). ATPase activity is inhibited by Cu(2+) plus DTT or Ag(+) (PubMed:12351646).</text>
</comment>
<comment type="biophysicochemical properties">
    <kinetics>
        <KM evidence="6">1.5 uM for copper</KM>
        <KM evidence="6">0.5 mM for ATP</KM>
        <KM evidence="9">1.48 uM for Cu(+)</KM>
        <KM evidence="10">5.4 uM for Cu(+)</KM>
        <Vmax evidence="6">0.19 umol/min/mg enzyme (in the presence of CuCl(2) and 1 mM DTT)</Vmax>
        <Vmax evidence="9">1.64 umol/h/mg enzyme for Cu(+)</Vmax>
        <text evidence="16">Export tested with Isoform Copper-exporting P-type ATPase.</text>
    </kinetics>
</comment>
<comment type="subunit">
    <text evidence="9">Copper-exporting P-type ATPase interacts with apo-periplasmic copper chaperone CusF; when CusF is precharged with copper it binds very little CopA. The periplasmic loops of CopA, especially the first half of loop 1, play a large role in binding to CusF (PubMed:24917681).</text>
</comment>
<comment type="subcellular location">
    <molecule>Copper-exporting P-type ATPase</molecule>
    <subcellularLocation>
        <location evidence="8 19">Cell inner membrane</location>
        <topology evidence="20">Multi-pass membrane protein</topology>
    </subcellularLocation>
</comment>
<comment type="subcellular location">
    <molecule>Isoform Soluble copper chaperone CopA(Z)</molecule>
    <subcellularLocation>
        <location evidence="22">Cytoplasm</location>
    </subcellularLocation>
</comment>
<comment type="alternative products">
    <event type="ribosomal frameshifting"/>
    <isoform>
        <id>Q59385-1</id>
        <name>Copper-exporting P-type ATPase</name>
        <sequence type="displayed"/>
    </isoform>
    <isoform>
        <id>Q59385-2</id>
        <name>Soluble copper chaperone CopA(Z)</name>
        <sequence type="described" ref="VSP_059176"/>
    </isoform>
</comment>
<comment type="induction">
    <molecule>Copper-exporting P-type ATPase</molecule>
    <text evidence="3 4">Induced by Cu(2+) and Ag(+) (at protein level) (PubMed:10639134). Transcriptionally regulated by CueR in response to Cu(+) or Ag(+) ions (PubMed:10639134, PubMed:11167016). Basal expression is low but unperturbed by disruption of cueR (PubMed:11167016).</text>
</comment>
<comment type="domain">
    <text evidence="9 10 16">The N-terminal domain (exact residues are not given in the paper) is not required for Cu(+)-binding (when deleted KM for Cu(+) binding is 1.32 uM) nor for ATPase activity, binds 2 Cu(+)/monomer (PubMed:24917681). Contradictory results give a considerable decrease in Cu affinity when residues 1-150 are deleted (KM=31.9 uM for Cu(+)) (PubMed:25899340). The first of 2 N-terminal heavy metal-binding domains (HMA 1, approximately residues 1-70, equivalent to CopA(Z)) has a 5-fold higher affinity for Cu(+) than HMA 2 (residues 71-150) and as a protein fragment can transfer Cu(+) to the ATPase fragment (residues 151-834), suggesting it has a Cu-chaperone function (PubMed:25899340). HMA 2 transfers Cu(+) to HMA 1 but the opposite reaction does not occur in vitro (PubMed:25899340). The HMA 1 fragment complements growth defects in trans, but if its CXXC motif is mutated, or if the remaining CXXC motif in HMA2 is mutated, complementation no longer occurs, showing the 2 HMA domains have different functions (PubMed:25899340). The periplasmic loops of CopA, especially the first half of loop 1, play a large role in binding to CusF (PubMed:24917681). Contradictory results between the various in vitro studies may be due to different levels of protein expression or reconstitution (Probable).</text>
</comment>
<comment type="disruption phenotype">
    <text evidence="3 4 7">Decreased resistance to Cu(+) (PubMed:10639134, PubMed:11167016). No change in resistance to Zn(2+) or Cd(2+) (PubMed:10639134). Decreased resistance to AgNO(3) (PubMed:12832075). Increased intracellular levels of Cu(2+) (PubMed:11167016).</text>
</comment>
<comment type="miscellaneous">
    <molecule>Isoform Soluble copper chaperone CopA(Z)</molecule>
    <text evidence="22">Expression of the CopA(Z) soluble copper chaperone isoform requires a -1 programmed ribosomal frameshift (PRF) at the 70th codon, promoted by a nucleotide 'slippery sequence'. Silent mutations in the 'slippery sequence' abrogate expression of CopA(Z) but still allow expression of the full length protein. Both the mRNA secondary structure (a possible pseudoknot just downstream of the slippage site) and the sequence of the protein in the ribosomal exit tunnel modulate the efficiency of the -1 PRF (PubMed:28107647).</text>
</comment>
<comment type="similarity">
    <text evidence="16">Belongs to the cation transport ATPase (P-type) (TC 3.A.3) family. Type IB subfamily.</text>
</comment>
<dbReference type="EC" id="7.2.2.8" evidence="17 21"/>
<dbReference type="EMBL" id="U58330">
    <property type="protein sequence ID" value="AAB02268.1"/>
    <property type="molecule type" value="Genomic_DNA"/>
</dbReference>
<dbReference type="EMBL" id="U82664">
    <property type="protein sequence ID" value="AAB40238.1"/>
    <property type="molecule type" value="Genomic_DNA"/>
</dbReference>
<dbReference type="EMBL" id="U00096">
    <property type="protein sequence ID" value="AAC73586.1"/>
    <property type="molecule type" value="Genomic_DNA"/>
</dbReference>
<dbReference type="EMBL" id="U00096">
    <property type="protein sequence ID" value="AYC08180.1"/>
    <property type="molecule type" value="Genomic_DNA"/>
</dbReference>
<dbReference type="EMBL" id="AP009048">
    <property type="protein sequence ID" value="BAE76263.1"/>
    <property type="molecule type" value="Genomic_DNA"/>
</dbReference>
<dbReference type="PIR" id="C64779">
    <property type="entry name" value="C64779"/>
</dbReference>
<dbReference type="RefSeq" id="NP_415017.1">
    <property type="nucleotide sequence ID" value="NC_000913.3"/>
</dbReference>
<dbReference type="RefSeq" id="WP_000083955.1">
    <property type="nucleotide sequence ID" value="NZ_SSZK01000009.1"/>
</dbReference>
<dbReference type="SMR" id="Q59385"/>
<dbReference type="BioGRID" id="4261336">
    <property type="interactions" value="119"/>
</dbReference>
<dbReference type="FunCoup" id="Q59385">
    <property type="interactions" value="533"/>
</dbReference>
<dbReference type="IntAct" id="Q59385">
    <property type="interactions" value="6"/>
</dbReference>
<dbReference type="STRING" id="511145.b0484"/>
<dbReference type="TCDB" id="3.A.3.5.5">
    <property type="family name" value="the p-type atpase (p-atpase) superfamily"/>
</dbReference>
<dbReference type="jPOST" id="Q59385"/>
<dbReference type="PaxDb" id="511145-b0484"/>
<dbReference type="EnsemblBacteria" id="AAC73586">
    <property type="protein sequence ID" value="AAC73586"/>
    <property type="gene ID" value="b0484"/>
</dbReference>
<dbReference type="EnsemblBacteria" id="AYC08180">
    <property type="protein sequence ID" value="AYC08180"/>
    <property type="gene ID" value="b0484"/>
</dbReference>
<dbReference type="GeneID" id="946106"/>
<dbReference type="KEGG" id="ecj:JW0473"/>
<dbReference type="KEGG" id="eco:b0484"/>
<dbReference type="KEGG" id="ecoc:C3026_02380"/>
<dbReference type="PATRIC" id="fig|1411691.4.peg.1792"/>
<dbReference type="EchoBASE" id="EB3035"/>
<dbReference type="eggNOG" id="COG2217">
    <property type="taxonomic scope" value="Bacteria"/>
</dbReference>
<dbReference type="HOGENOM" id="CLU_001771_0_3_6"/>
<dbReference type="InParanoid" id="Q59385"/>
<dbReference type="OMA" id="HWMLPAW"/>
<dbReference type="OrthoDB" id="9814270at2"/>
<dbReference type="PhylomeDB" id="Q59385"/>
<dbReference type="BRENDA" id="7.2.2.8">
    <property type="organism ID" value="2026"/>
</dbReference>
<dbReference type="SABIO-RK" id="Q59385"/>
<dbReference type="PRO" id="PR:Q59385"/>
<dbReference type="Proteomes" id="UP000000625">
    <property type="component" value="Chromosome"/>
</dbReference>
<dbReference type="GO" id="GO:0005737">
    <property type="term" value="C:cytoplasm"/>
    <property type="evidence" value="ECO:0007669"/>
    <property type="project" value="UniProtKB-SubCell"/>
</dbReference>
<dbReference type="GO" id="GO:0016020">
    <property type="term" value="C:membrane"/>
    <property type="evidence" value="ECO:0007005"/>
    <property type="project" value="UniProtKB"/>
</dbReference>
<dbReference type="GO" id="GO:0005886">
    <property type="term" value="C:plasma membrane"/>
    <property type="evidence" value="ECO:0000314"/>
    <property type="project" value="EcoCyc"/>
</dbReference>
<dbReference type="GO" id="GO:0005524">
    <property type="term" value="F:ATP binding"/>
    <property type="evidence" value="ECO:0007669"/>
    <property type="project" value="UniProtKB-KW"/>
</dbReference>
<dbReference type="GO" id="GO:0016887">
    <property type="term" value="F:ATP hydrolysis activity"/>
    <property type="evidence" value="ECO:0000314"/>
    <property type="project" value="EcoliWiki"/>
</dbReference>
<dbReference type="GO" id="GO:0005507">
    <property type="term" value="F:copper ion binding"/>
    <property type="evidence" value="ECO:0000318"/>
    <property type="project" value="GO_Central"/>
</dbReference>
<dbReference type="GO" id="GO:0043682">
    <property type="term" value="F:P-type divalent copper transporter activity"/>
    <property type="evidence" value="ECO:0000318"/>
    <property type="project" value="GO_Central"/>
</dbReference>
<dbReference type="GO" id="GO:0015662">
    <property type="term" value="F:P-type ion transporter activity"/>
    <property type="evidence" value="ECO:0000314"/>
    <property type="project" value="EcoCyc"/>
</dbReference>
<dbReference type="GO" id="GO:0140581">
    <property type="term" value="F:P-type monovalent copper transporter activity"/>
    <property type="evidence" value="ECO:0007669"/>
    <property type="project" value="UniProtKB-EC"/>
</dbReference>
<dbReference type="GO" id="GO:0015080">
    <property type="term" value="F:silver ion transmembrane transporter activity"/>
    <property type="evidence" value="ECO:0000315"/>
    <property type="project" value="EcoCyc"/>
</dbReference>
<dbReference type="GO" id="GO:0071280">
    <property type="term" value="P:cellular response to copper ion"/>
    <property type="evidence" value="ECO:0000270"/>
    <property type="project" value="EcoCyc"/>
</dbReference>
<dbReference type="GO" id="GO:0071292">
    <property type="term" value="P:cellular response to silver ion"/>
    <property type="evidence" value="ECO:0000270"/>
    <property type="project" value="EcoCyc"/>
</dbReference>
<dbReference type="GO" id="GO:0060003">
    <property type="term" value="P:copper ion export"/>
    <property type="evidence" value="ECO:0000314"/>
    <property type="project" value="EcoCyc"/>
</dbReference>
<dbReference type="GO" id="GO:0055070">
    <property type="term" value="P:copper ion homeostasis"/>
    <property type="evidence" value="ECO:0000318"/>
    <property type="project" value="GO_Central"/>
</dbReference>
<dbReference type="GO" id="GO:0006825">
    <property type="term" value="P:copper ion transport"/>
    <property type="evidence" value="ECO:0000315"/>
    <property type="project" value="EcoliWiki"/>
</dbReference>
<dbReference type="GO" id="GO:0010273">
    <property type="term" value="P:detoxification of copper ion"/>
    <property type="evidence" value="ECO:0000314"/>
    <property type="project" value="EcoCyc"/>
</dbReference>
<dbReference type="GO" id="GO:1902601">
    <property type="term" value="P:silver ion transmembrane transport"/>
    <property type="evidence" value="ECO:0000315"/>
    <property type="project" value="EcoCyc"/>
</dbReference>
<dbReference type="GO" id="GO:0075523">
    <property type="term" value="P:viral translational frameshifting"/>
    <property type="evidence" value="ECO:0007669"/>
    <property type="project" value="UniProtKB-KW"/>
</dbReference>
<dbReference type="CDD" id="cd00371">
    <property type="entry name" value="HMA"/>
    <property type="match status" value="2"/>
</dbReference>
<dbReference type="CDD" id="cd02094">
    <property type="entry name" value="P-type_ATPase_Cu-like"/>
    <property type="match status" value="1"/>
</dbReference>
<dbReference type="FunFam" id="3.30.70.100:FF:000030">
    <property type="entry name" value="Copper-exporting P-type ATPase"/>
    <property type="match status" value="1"/>
</dbReference>
<dbReference type="FunFam" id="3.30.70.100:FF:000032">
    <property type="entry name" value="Copper-exporting P-type ATPase"/>
    <property type="match status" value="1"/>
</dbReference>
<dbReference type="FunFam" id="3.40.1110.10:FF:000036">
    <property type="entry name" value="Copper-exporting P-type ATPase"/>
    <property type="match status" value="1"/>
</dbReference>
<dbReference type="FunFam" id="2.70.150.10:FF:000020">
    <property type="entry name" value="Copper-exporting P-type ATPase A"/>
    <property type="match status" value="1"/>
</dbReference>
<dbReference type="Gene3D" id="3.30.70.100">
    <property type="match status" value="2"/>
</dbReference>
<dbReference type="Gene3D" id="3.40.1110.10">
    <property type="entry name" value="Calcium-transporting ATPase, cytoplasmic domain N"/>
    <property type="match status" value="1"/>
</dbReference>
<dbReference type="Gene3D" id="2.70.150.10">
    <property type="entry name" value="Calcium-transporting ATPase, cytoplasmic transduction domain A"/>
    <property type="match status" value="1"/>
</dbReference>
<dbReference type="Gene3D" id="3.40.50.1000">
    <property type="entry name" value="HAD superfamily/HAD-like"/>
    <property type="match status" value="1"/>
</dbReference>
<dbReference type="InterPro" id="IPR023299">
    <property type="entry name" value="ATPase_P-typ_cyto_dom_N"/>
</dbReference>
<dbReference type="InterPro" id="IPR018303">
    <property type="entry name" value="ATPase_P-typ_P_site"/>
</dbReference>
<dbReference type="InterPro" id="IPR023298">
    <property type="entry name" value="ATPase_P-typ_TM_dom_sf"/>
</dbReference>
<dbReference type="InterPro" id="IPR008250">
    <property type="entry name" value="ATPase_P-typ_transduc_dom_A_sf"/>
</dbReference>
<dbReference type="InterPro" id="IPR036412">
    <property type="entry name" value="HAD-like_sf"/>
</dbReference>
<dbReference type="InterPro" id="IPR023214">
    <property type="entry name" value="HAD_sf"/>
</dbReference>
<dbReference type="InterPro" id="IPR017969">
    <property type="entry name" value="Heavy-metal-associated_CS"/>
</dbReference>
<dbReference type="InterPro" id="IPR006121">
    <property type="entry name" value="HMA_dom"/>
</dbReference>
<dbReference type="InterPro" id="IPR036163">
    <property type="entry name" value="HMA_dom_sf"/>
</dbReference>
<dbReference type="InterPro" id="IPR027256">
    <property type="entry name" value="P-typ_ATPase_IB"/>
</dbReference>
<dbReference type="InterPro" id="IPR001757">
    <property type="entry name" value="P_typ_ATPase"/>
</dbReference>
<dbReference type="InterPro" id="IPR044492">
    <property type="entry name" value="P_typ_ATPase_HD_dom"/>
</dbReference>
<dbReference type="NCBIfam" id="TIGR01511">
    <property type="entry name" value="ATPase-IB1_Cu"/>
    <property type="match status" value="1"/>
</dbReference>
<dbReference type="NCBIfam" id="TIGR01525">
    <property type="entry name" value="ATPase-IB_hvy"/>
    <property type="match status" value="1"/>
</dbReference>
<dbReference type="NCBIfam" id="TIGR01494">
    <property type="entry name" value="ATPase_P-type"/>
    <property type="match status" value="1"/>
</dbReference>
<dbReference type="NCBIfam" id="NF007952">
    <property type="entry name" value="PRK10671.1"/>
    <property type="match status" value="1"/>
</dbReference>
<dbReference type="PANTHER" id="PTHR43520">
    <property type="entry name" value="ATP7, ISOFORM B"/>
    <property type="match status" value="1"/>
</dbReference>
<dbReference type="PANTHER" id="PTHR43520:SF6">
    <property type="entry name" value="COPPER-EXPORTING P-TYPE ATPASE"/>
    <property type="match status" value="1"/>
</dbReference>
<dbReference type="Pfam" id="PF00122">
    <property type="entry name" value="E1-E2_ATPase"/>
    <property type="match status" value="1"/>
</dbReference>
<dbReference type="Pfam" id="PF00403">
    <property type="entry name" value="HMA"/>
    <property type="match status" value="2"/>
</dbReference>
<dbReference type="Pfam" id="PF00702">
    <property type="entry name" value="Hydrolase"/>
    <property type="match status" value="1"/>
</dbReference>
<dbReference type="PRINTS" id="PR00119">
    <property type="entry name" value="CATATPASE"/>
</dbReference>
<dbReference type="PRINTS" id="PR00120">
    <property type="entry name" value="HATPASE"/>
</dbReference>
<dbReference type="SFLD" id="SFLDS00003">
    <property type="entry name" value="Haloacid_Dehalogenase"/>
    <property type="match status" value="1"/>
</dbReference>
<dbReference type="SFLD" id="SFLDF00027">
    <property type="entry name" value="p-type_atpase"/>
    <property type="match status" value="1"/>
</dbReference>
<dbReference type="SUPFAM" id="SSF81653">
    <property type="entry name" value="Calcium ATPase, transduction domain A"/>
    <property type="match status" value="1"/>
</dbReference>
<dbReference type="SUPFAM" id="SSF81665">
    <property type="entry name" value="Calcium ATPase, transmembrane domain M"/>
    <property type="match status" value="1"/>
</dbReference>
<dbReference type="SUPFAM" id="SSF56784">
    <property type="entry name" value="HAD-like"/>
    <property type="match status" value="1"/>
</dbReference>
<dbReference type="SUPFAM" id="SSF55008">
    <property type="entry name" value="HMA, heavy metal-associated domain"/>
    <property type="match status" value="2"/>
</dbReference>
<dbReference type="PROSITE" id="PS00154">
    <property type="entry name" value="ATPASE_E1_E2"/>
    <property type="match status" value="1"/>
</dbReference>
<dbReference type="PROSITE" id="PS01047">
    <property type="entry name" value="HMA_1"/>
    <property type="match status" value="1"/>
</dbReference>
<dbReference type="PROSITE" id="PS50846">
    <property type="entry name" value="HMA_2"/>
    <property type="match status" value="2"/>
</dbReference>
<proteinExistence type="evidence at protein level"/>
<reference key="1">
    <citation type="submission" date="1996-06" db="EMBL/GenBank/DDBJ databases">
        <authorList>
            <person name="Das S."/>
            <person name="Chuang E."/>
            <person name="Vulpe C."/>
            <person name="Goldman J."/>
            <person name="Gitschier J."/>
        </authorList>
    </citation>
    <scope>NUCLEOTIDE SEQUENCE [GENOMIC DNA]</scope>
    <source>
        <strain>K12</strain>
    </source>
</reference>
<reference key="2">
    <citation type="submission" date="1997-01" db="EMBL/GenBank/DDBJ databases">
        <title>Sequence of minutes 4-25 of Escherichia coli.</title>
        <authorList>
            <person name="Chung E."/>
            <person name="Allen E."/>
            <person name="Araujo R."/>
            <person name="Aparicio A.M."/>
            <person name="Davis K."/>
            <person name="Duncan M."/>
            <person name="Federspiel N."/>
            <person name="Hyman R."/>
            <person name="Kalman S."/>
            <person name="Komp C."/>
            <person name="Kurdi O."/>
            <person name="Lew H."/>
            <person name="Lin D."/>
            <person name="Namath A."/>
            <person name="Oefner P."/>
            <person name="Roberts D."/>
            <person name="Schramm S."/>
            <person name="Davis R.W."/>
        </authorList>
    </citation>
    <scope>NUCLEOTIDE SEQUENCE [LARGE SCALE GENOMIC DNA]</scope>
    <source>
        <strain>K12 / MG1655 / ATCC 47076</strain>
    </source>
</reference>
<reference key="3">
    <citation type="journal article" date="1997" name="Science">
        <title>The complete genome sequence of Escherichia coli K-12.</title>
        <authorList>
            <person name="Blattner F.R."/>
            <person name="Plunkett G. III"/>
            <person name="Bloch C.A."/>
            <person name="Perna N.T."/>
            <person name="Burland V."/>
            <person name="Riley M."/>
            <person name="Collado-Vides J."/>
            <person name="Glasner J.D."/>
            <person name="Rode C.K."/>
            <person name="Mayhew G.F."/>
            <person name="Gregor J."/>
            <person name="Davis N.W."/>
            <person name="Kirkpatrick H.A."/>
            <person name="Goeden M.A."/>
            <person name="Rose D.J."/>
            <person name="Mau B."/>
            <person name="Shao Y."/>
        </authorList>
    </citation>
    <scope>NUCLEOTIDE SEQUENCE [LARGE SCALE GENOMIC DNA]</scope>
    <source>
        <strain>K12 / MG1655 / ATCC 47076</strain>
    </source>
</reference>
<reference key="4">
    <citation type="journal article" date="2006" name="Mol. Syst. Biol.">
        <title>Highly accurate genome sequences of Escherichia coli K-12 strains MG1655 and W3110.</title>
        <authorList>
            <person name="Hayashi K."/>
            <person name="Morooka N."/>
            <person name="Yamamoto Y."/>
            <person name="Fujita K."/>
            <person name="Isono K."/>
            <person name="Choi S."/>
            <person name="Ohtsubo E."/>
            <person name="Baba T."/>
            <person name="Wanner B.L."/>
            <person name="Mori H."/>
            <person name="Horiuchi T."/>
        </authorList>
    </citation>
    <scope>NUCLEOTIDE SEQUENCE [LARGE SCALE GENOMIC DNA]</scope>
    <source>
        <strain>K12 / W3110 / ATCC 27325 / DSM 5911</strain>
    </source>
</reference>
<reference key="5">
    <citation type="journal article" date="1998" name="FEMS Microbiol. Lett.">
        <title>Small genes/gene-products in Escherichia coli K-12.</title>
        <authorList>
            <person name="Wasinger V.C."/>
            <person name="Humphery-Smith I."/>
        </authorList>
    </citation>
    <scope>PROTEIN SEQUENCE OF 2-11</scope>
    <source>
        <strain>K12</strain>
    </source>
</reference>
<reference key="6">
    <citation type="journal article" date="2000" name="Proc. Natl. Acad. Sci. U.S.A.">
        <title>CopA: an Escherichia coli Cu(I)-translocating P-type ATPase.</title>
        <authorList>
            <person name="Rensing C."/>
            <person name="Fan B."/>
            <person name="Sharma R."/>
            <person name="Mitra B."/>
            <person name="Rosen B.P."/>
        </authorList>
    </citation>
    <scope>FUNCTION</scope>
    <scope>CATALYTIC ACTIVITY</scope>
    <scope>ACTIVITY REGULATION</scope>
    <scope>INDUCTION BY COPPER AND SILVER</scope>
    <scope>DISRUPTION PHENOTYPE</scope>
    <source>
        <strain>K12 / W3110 / ATCC 27325 / DSM 5911</strain>
        <strain>LMG194</strain>
    </source>
</reference>
<reference key="7">
    <citation type="journal article" date="2000" name="Gene">
        <title>Control of copper homeostasis in Escherichia coli by a P-type ATPase, CopA, and a MerR-like transcriptional activator, CopR.</title>
        <authorList>
            <person name="Petersen C."/>
            <person name="Moeller L.B."/>
        </authorList>
    </citation>
    <scope>FUNCTION</scope>
    <scope>INDUCTION BY COPPER</scope>
    <scope>DISRUPTION PHENOTYPE</scope>
    <source>
        <strain>K12</strain>
    </source>
</reference>
<reference key="8">
    <citation type="journal article" date="2001" name="Biochem. Biophys. Res. Commun.">
        <title>Escherichia coli CopA N-terminal Cys(X)(2)Cys motifs are not required for copper resistance or transport.</title>
        <authorList>
            <person name="Fan B."/>
            <person name="Grass G."/>
            <person name="Rensing C."/>
            <person name="Rosen B.P."/>
        </authorList>
    </citation>
    <scope>FUNCTION</scope>
    <scope>MOTIF</scope>
    <scope>MUTAGENESIS OF 8-THR--LEU-150; 14-CYS--CYS-17 AND 110-CYS--CYS-113</scope>
    <source>
        <strain>LMG194</strain>
    </source>
</reference>
<reference key="9">
    <citation type="journal article" date="2002" name="J. Biol. Chem.">
        <title>Biochemical characterization of CopA, the Escherichia coli Cu(I)-translocating P-type ATPase.</title>
        <authorList>
            <person name="Fan B."/>
            <person name="Rosen B.P."/>
        </authorList>
    </citation>
    <scope>FUNCTION IN TRANSPORT</scope>
    <scope>FUNCTION AS AN ATPASE</scope>
    <scope>BIOPHYSICOCHEMICAL PROPERTIES</scope>
    <scope>ACTIVITY REGULATION</scope>
    <scope>PHOSPHORYLATION</scope>
    <scope>MUTAGENESIS OF 3-GLN--CYS-113; 7-LEU--GLU-54; 14-CYS--CYS-17; 110-CYS--CYS-113; CYS-479 AND CYS-481</scope>
    <source>
        <strain>LMG194</strain>
    </source>
</reference>
<reference key="10">
    <citation type="journal article" date="2003" name="FEBS Lett.">
        <title>Measurement of cytoplasmic copper, silver, and gold with a lux biosensor shows copper and silver, but not gold, efflux by the CopA ATPase of Escherichia coli.</title>
        <authorList>
            <person name="Stoyanov J.V."/>
            <person name="Magnani D."/>
            <person name="Solioz M."/>
        </authorList>
    </citation>
    <scope>FUNCTION IN SILVER EXPORT</scope>
    <scope>DISRUPTION PHENOTYPE</scope>
    <source>
        <strain>K12 / W3110 / ATCC 27325 / DSM 5911</strain>
    </source>
</reference>
<reference key="11">
    <citation type="journal article" date="2005" name="Science">
        <title>Global topology analysis of the Escherichia coli inner membrane proteome.</title>
        <authorList>
            <person name="Daley D.O."/>
            <person name="Rapp M."/>
            <person name="Granseth E."/>
            <person name="Melen K."/>
            <person name="Drew D."/>
            <person name="von Heijne G."/>
        </authorList>
    </citation>
    <scope>SUBCELLULAR LOCATION</scope>
    <scope>TOPOLOGY [LARGE SCALE ANALYSIS]</scope>
    <source>
        <strain>K12 / MG1655 / ATCC 47076</strain>
    </source>
</reference>
<reference key="12">
    <citation type="journal article" date="2014" name="J. Biol. Chem.">
        <title>Mechanism of ATPase-mediated Cu+ export and delivery to periplasmic chaperones: the interaction of Escherichia coli CopA and CusF.</title>
        <authorList>
            <person name="Padilla-Benavides T."/>
            <person name="George Thompson A.M."/>
            <person name="McEvoy M.M."/>
            <person name="Argueello J.M."/>
        </authorList>
    </citation>
    <scope>FUNCTION AS AN ATPASE</scope>
    <scope>FUNCTION IN TRANSFER TO CUSF</scope>
    <scope>CATALYTIC ACTIVITY</scope>
    <scope>REACTION MECHANISM</scope>
    <scope>BIOPHYSICOCHEMICAL PROPERTIES</scope>
    <scope>COPPER-BINDING</scope>
    <scope>SUBUNIT</scope>
    <scope>DOMAIN</scope>
    <scope>TOPOLOGY</scope>
    <scope>MUTAGENESIS OF MET-204; 207-ASP--MET-210; 212-THR--ARG-216; 273-TRP--PHE-277; 279-MET--HIS-283; GLU-287 AND 797-TRP--THR-802</scope>
</reference>
<reference key="13">
    <citation type="journal article" date="2015" name="Mol. Microbiol.">
        <title>Distinct functions of serial metal-binding domains in the Escherichia coli P1 B-ATPase CopA.</title>
        <authorList>
            <person name="Drees S.L."/>
            <person name="Beyer D.F."/>
            <person name="Lenders-Lomscher C."/>
            <person name="Luebben M."/>
        </authorList>
    </citation>
    <scope>FUNCTION AS AN ATPASE</scope>
    <scope>POSSIBLE CHAPERONE FUNCTION</scope>
    <scope>ACTIVITY REGULATION</scope>
    <scope>BIOPHYSICOCHEMICAL PROPERTIES</scope>
    <scope>DOMAIN</scope>
    <scope>MUTAGENESIS OF 1-MET--ALA-70; 14-CYS--CYS-17 AND 110-CYS--CYS-113</scope>
    <source>
        <strain>LMG194</strain>
    </source>
</reference>
<reference key="14">
    <citation type="journal article" date="2017" name="Mol. Cell">
        <title>Programmed ribosomal frameshifting generates a copper transporter and a copper chaperone from the same gene.</title>
        <authorList>
            <person name="Meydan S."/>
            <person name="Klepacki D."/>
            <person name="Karthikeyan S."/>
            <person name="Margus T."/>
            <person name="Thomas P."/>
            <person name="Jones J.E."/>
            <person name="Khan Y."/>
            <person name="Briggs J."/>
            <person name="Dinman J.D."/>
            <person name="Vazquez-Laslop N."/>
            <person name="Mankin A.S."/>
        </authorList>
    </citation>
    <scope>RIBOSOMAL FRAMESHIFT TO TRANSLATE ISOFORM SOLUBLE COPPER CHAPERONE COPA(Z)</scope>
    <scope>FUNCTION AS A COPPER CHAPERONE</scope>
</reference>
<organism>
    <name type="scientific">Escherichia coli (strain K12)</name>
    <dbReference type="NCBI Taxonomy" id="83333"/>
    <lineage>
        <taxon>Bacteria</taxon>
        <taxon>Pseudomonadati</taxon>
        <taxon>Pseudomonadota</taxon>
        <taxon>Gammaproteobacteria</taxon>
        <taxon>Enterobacterales</taxon>
        <taxon>Enterobacteriaceae</taxon>
        <taxon>Escherichia</taxon>
    </lineage>
</organism>
<name>COPA_ECOLI</name>
<accession>Q59385</accession>
<accession>A0A385XJA3</accession>
<accession>P78245</accession>
<accession>Q2MBU3</accession>
<sequence>MSQTIDLTLDGLSCGHCVKRVKESLEQRPDVEQADVSITEAHVTGTASAEQLIETIKQAGYDASVSHPKAKPLAESSIPSEALTAVSEALPAATADDDDSQQLLLSGMSCASCVTRVQNALQSVPGVTQARVNLAERTALVMGSASPQDLVQAVEKAGYGAEAIEDDAKRRERQQETAVATMKRFRWQAIVALAVGIPVMVWGMIGDNMMVTADNRSLWLVIGLITLAVMVFAGGHFYRSAWKSLLNGAATMDTLVALGTGVAWLYSMSVNLWPQWFPMEARHLYYEASAMIIGLINLGHMLEARARQRSSKALEKLLDLTPPTARLVTDEGEKSVPLAEVQPGMLLRLTTGDRVPVDGEITQGEAWLDEAMLTGEPIPQQKGEGDSVHAGTVVQDGSVLFRASAVGSHTTLSRIIRMVRQAQSSKPEIGQLADKISAVFVPVVVVIALVSAAIWYFFGPAPQIVYTLVIATTVLIIACPCALGLATPMSIISGVGRAAEFGVLVRDADALQRASTLDTVVFDKTGTLTEGKPQVVAVKTFADVDEAQALRLAAALEQGSSHPLARAILDKAGDMQLPQVNGFRTLRGLGVSGEAEGHALLLGNQALLNEQQVGTKAIEAEITAQASQGATPVLLAVDGKAVALLAVRDPLRSDSVAALQRLHKAGYRLVMLTGDNPTTANAIAKEAGIDEVIAGVLPDGKAEAIKHLQSEGRQVAMVGDGINDAPALAQADVGIAMGGGSDVAIETAAITLMRHSLMGVADALAISRATLHNMKQNLLGAFIYNSIGIPVAAGILWPFTGTLLNPVVAGAAMALSSITVVSNANRLLRFKPKE</sequence>